<evidence type="ECO:0000255" key="1">
    <source>
        <dbReference type="HAMAP-Rule" id="MF_00252"/>
    </source>
</evidence>
<protein>
    <recommendedName>
        <fullName evidence="1">Lysine--tRNA ligase</fullName>
        <ecNumber evidence="1">6.1.1.6</ecNumber>
    </recommendedName>
    <alternativeName>
        <fullName evidence="1">Lysyl-tRNA synthetase</fullName>
        <shortName evidence="1">LysRS</shortName>
    </alternativeName>
</protein>
<accession>B5F5G4</accession>
<keyword id="KW-0030">Aminoacyl-tRNA synthetase</keyword>
<keyword id="KW-0067">ATP-binding</keyword>
<keyword id="KW-0963">Cytoplasm</keyword>
<keyword id="KW-0436">Ligase</keyword>
<keyword id="KW-0460">Magnesium</keyword>
<keyword id="KW-0479">Metal-binding</keyword>
<keyword id="KW-0547">Nucleotide-binding</keyword>
<keyword id="KW-0648">Protein biosynthesis</keyword>
<organism>
    <name type="scientific">Salmonella agona (strain SL483)</name>
    <dbReference type="NCBI Taxonomy" id="454166"/>
    <lineage>
        <taxon>Bacteria</taxon>
        <taxon>Pseudomonadati</taxon>
        <taxon>Pseudomonadota</taxon>
        <taxon>Gammaproteobacteria</taxon>
        <taxon>Enterobacterales</taxon>
        <taxon>Enterobacteriaceae</taxon>
        <taxon>Salmonella</taxon>
    </lineage>
</organism>
<gene>
    <name evidence="1" type="primary">lysS</name>
    <name type="ordered locus">SeAg_B3196</name>
</gene>
<sequence>MSEQNAQGADEVVDLNNEMKARREKLAALREQGIPFPNDFRRDRTSDQLHAEFDAKEAEELEALNIEVSVAGRMMTRRIMGKASFVTLQDVGGRIQLYVARDDLPEGVYNEQFKKWDLGDILGAKGKLFKTKTGELSIHCTELRLLTKALRPLPDKFHGLQDQEARYRQRYLDLISNDESRNTFKTRSKILAGIRQFMVARGFMEVETPMMQVIPGGASARPFITHHNALDLDMYLRIAPELYLKRLVVGGFERVFEINRNFRNEGISVRHNPEFTMMELYMAYADYKDLIELTESLFRTLAQDVLGTTQVPYGDEVFDFGKPFEKLTMREAIKKYRPETDMADLDNFDSAKAIAESIGIHVEKSWGLGRIVTEIFDEVAEAHLIQPTFITEYPAEVSPLARRNDVNPEITDRFEFFIGGREIGNGFSELNDAEDQAQRFLDQVNAKAAGDDEAMFYDEDYVTALEHGLPPTAGLGIGIDRMVMLFTNSHTIRDVILFPAMRPVK</sequence>
<proteinExistence type="inferred from homology"/>
<reference key="1">
    <citation type="journal article" date="2011" name="J. Bacteriol.">
        <title>Comparative genomics of 28 Salmonella enterica isolates: evidence for CRISPR-mediated adaptive sublineage evolution.</title>
        <authorList>
            <person name="Fricke W.F."/>
            <person name="Mammel M.K."/>
            <person name="McDermott P.F."/>
            <person name="Tartera C."/>
            <person name="White D.G."/>
            <person name="Leclerc J.E."/>
            <person name="Ravel J."/>
            <person name="Cebula T.A."/>
        </authorList>
    </citation>
    <scope>NUCLEOTIDE SEQUENCE [LARGE SCALE GENOMIC DNA]</scope>
    <source>
        <strain>SL483</strain>
    </source>
</reference>
<feature type="chain" id="PRO_1000101140" description="Lysine--tRNA ligase">
    <location>
        <begin position="1"/>
        <end position="505"/>
    </location>
</feature>
<feature type="binding site" evidence="1">
    <location>
        <position position="415"/>
    </location>
    <ligand>
        <name>Mg(2+)</name>
        <dbReference type="ChEBI" id="CHEBI:18420"/>
        <label>1</label>
    </ligand>
</feature>
<feature type="binding site" evidence="1">
    <location>
        <position position="422"/>
    </location>
    <ligand>
        <name>Mg(2+)</name>
        <dbReference type="ChEBI" id="CHEBI:18420"/>
        <label>1</label>
    </ligand>
</feature>
<feature type="binding site" evidence="1">
    <location>
        <position position="422"/>
    </location>
    <ligand>
        <name>Mg(2+)</name>
        <dbReference type="ChEBI" id="CHEBI:18420"/>
        <label>2</label>
    </ligand>
</feature>
<name>SYK_SALA4</name>
<dbReference type="EC" id="6.1.1.6" evidence="1"/>
<dbReference type="EMBL" id="CP001138">
    <property type="protein sequence ID" value="ACH51363.1"/>
    <property type="molecule type" value="Genomic_DNA"/>
</dbReference>
<dbReference type="RefSeq" id="WP_000003339.1">
    <property type="nucleotide sequence ID" value="NC_011149.1"/>
</dbReference>
<dbReference type="SMR" id="B5F5G4"/>
<dbReference type="KEGG" id="sea:SeAg_B3196"/>
<dbReference type="HOGENOM" id="CLU_008255_6_0_6"/>
<dbReference type="Proteomes" id="UP000008819">
    <property type="component" value="Chromosome"/>
</dbReference>
<dbReference type="GO" id="GO:0005829">
    <property type="term" value="C:cytosol"/>
    <property type="evidence" value="ECO:0007669"/>
    <property type="project" value="TreeGrafter"/>
</dbReference>
<dbReference type="GO" id="GO:0005524">
    <property type="term" value="F:ATP binding"/>
    <property type="evidence" value="ECO:0007669"/>
    <property type="project" value="UniProtKB-UniRule"/>
</dbReference>
<dbReference type="GO" id="GO:0004824">
    <property type="term" value="F:lysine-tRNA ligase activity"/>
    <property type="evidence" value="ECO:0007669"/>
    <property type="project" value="UniProtKB-UniRule"/>
</dbReference>
<dbReference type="GO" id="GO:0000287">
    <property type="term" value="F:magnesium ion binding"/>
    <property type="evidence" value="ECO:0007669"/>
    <property type="project" value="UniProtKB-UniRule"/>
</dbReference>
<dbReference type="GO" id="GO:0000049">
    <property type="term" value="F:tRNA binding"/>
    <property type="evidence" value="ECO:0007669"/>
    <property type="project" value="TreeGrafter"/>
</dbReference>
<dbReference type="GO" id="GO:0006430">
    <property type="term" value="P:lysyl-tRNA aminoacylation"/>
    <property type="evidence" value="ECO:0007669"/>
    <property type="project" value="UniProtKB-UniRule"/>
</dbReference>
<dbReference type="CDD" id="cd00775">
    <property type="entry name" value="LysRS_core"/>
    <property type="match status" value="1"/>
</dbReference>
<dbReference type="CDD" id="cd04322">
    <property type="entry name" value="LysRS_N"/>
    <property type="match status" value="1"/>
</dbReference>
<dbReference type="FunFam" id="2.40.50.140:FF:000024">
    <property type="entry name" value="Lysine--tRNA ligase"/>
    <property type="match status" value="1"/>
</dbReference>
<dbReference type="FunFam" id="3.30.930.10:FF:000001">
    <property type="entry name" value="Lysine--tRNA ligase"/>
    <property type="match status" value="1"/>
</dbReference>
<dbReference type="Gene3D" id="3.30.930.10">
    <property type="entry name" value="Bira Bifunctional Protein, Domain 2"/>
    <property type="match status" value="1"/>
</dbReference>
<dbReference type="Gene3D" id="2.40.50.140">
    <property type="entry name" value="Nucleic acid-binding proteins"/>
    <property type="match status" value="1"/>
</dbReference>
<dbReference type="HAMAP" id="MF_00252">
    <property type="entry name" value="Lys_tRNA_synth_class2"/>
    <property type="match status" value="1"/>
</dbReference>
<dbReference type="InterPro" id="IPR004364">
    <property type="entry name" value="Aa-tRNA-synt_II"/>
</dbReference>
<dbReference type="InterPro" id="IPR006195">
    <property type="entry name" value="aa-tRNA-synth_II"/>
</dbReference>
<dbReference type="InterPro" id="IPR045864">
    <property type="entry name" value="aa-tRNA-synth_II/BPL/LPL"/>
</dbReference>
<dbReference type="InterPro" id="IPR002313">
    <property type="entry name" value="Lys-tRNA-ligase_II"/>
</dbReference>
<dbReference type="InterPro" id="IPR034762">
    <property type="entry name" value="Lys-tRNA-ligase_II_bac/euk"/>
</dbReference>
<dbReference type="InterPro" id="IPR044136">
    <property type="entry name" value="Lys-tRNA-ligase_II_N"/>
</dbReference>
<dbReference type="InterPro" id="IPR018149">
    <property type="entry name" value="Lys-tRNA-synth_II_C"/>
</dbReference>
<dbReference type="InterPro" id="IPR012340">
    <property type="entry name" value="NA-bd_OB-fold"/>
</dbReference>
<dbReference type="InterPro" id="IPR004365">
    <property type="entry name" value="NA-bd_OB_tRNA"/>
</dbReference>
<dbReference type="NCBIfam" id="TIGR00499">
    <property type="entry name" value="lysS_bact"/>
    <property type="match status" value="1"/>
</dbReference>
<dbReference type="NCBIfam" id="NF001756">
    <property type="entry name" value="PRK00484.1"/>
    <property type="match status" value="1"/>
</dbReference>
<dbReference type="NCBIfam" id="NF009101">
    <property type="entry name" value="PRK12445.1"/>
    <property type="match status" value="1"/>
</dbReference>
<dbReference type="PANTHER" id="PTHR42918:SF15">
    <property type="entry name" value="LYSINE--TRNA LIGASE, CHLOROPLASTIC_MITOCHONDRIAL"/>
    <property type="match status" value="1"/>
</dbReference>
<dbReference type="PANTHER" id="PTHR42918">
    <property type="entry name" value="LYSYL-TRNA SYNTHETASE"/>
    <property type="match status" value="1"/>
</dbReference>
<dbReference type="Pfam" id="PF00152">
    <property type="entry name" value="tRNA-synt_2"/>
    <property type="match status" value="1"/>
</dbReference>
<dbReference type="Pfam" id="PF01336">
    <property type="entry name" value="tRNA_anti-codon"/>
    <property type="match status" value="1"/>
</dbReference>
<dbReference type="PIRSF" id="PIRSF039101">
    <property type="entry name" value="LysRS2"/>
    <property type="match status" value="1"/>
</dbReference>
<dbReference type="PRINTS" id="PR00982">
    <property type="entry name" value="TRNASYNTHLYS"/>
</dbReference>
<dbReference type="SUPFAM" id="SSF55681">
    <property type="entry name" value="Class II aaRS and biotin synthetases"/>
    <property type="match status" value="1"/>
</dbReference>
<dbReference type="SUPFAM" id="SSF50249">
    <property type="entry name" value="Nucleic acid-binding proteins"/>
    <property type="match status" value="1"/>
</dbReference>
<dbReference type="PROSITE" id="PS50862">
    <property type="entry name" value="AA_TRNA_LIGASE_II"/>
    <property type="match status" value="1"/>
</dbReference>
<comment type="catalytic activity">
    <reaction evidence="1">
        <text>tRNA(Lys) + L-lysine + ATP = L-lysyl-tRNA(Lys) + AMP + diphosphate</text>
        <dbReference type="Rhea" id="RHEA:20792"/>
        <dbReference type="Rhea" id="RHEA-COMP:9696"/>
        <dbReference type="Rhea" id="RHEA-COMP:9697"/>
        <dbReference type="ChEBI" id="CHEBI:30616"/>
        <dbReference type="ChEBI" id="CHEBI:32551"/>
        <dbReference type="ChEBI" id="CHEBI:33019"/>
        <dbReference type="ChEBI" id="CHEBI:78442"/>
        <dbReference type="ChEBI" id="CHEBI:78529"/>
        <dbReference type="ChEBI" id="CHEBI:456215"/>
        <dbReference type="EC" id="6.1.1.6"/>
    </reaction>
</comment>
<comment type="cofactor">
    <cofactor evidence="1">
        <name>Mg(2+)</name>
        <dbReference type="ChEBI" id="CHEBI:18420"/>
    </cofactor>
    <text evidence="1">Binds 3 Mg(2+) ions per subunit.</text>
</comment>
<comment type="subunit">
    <text evidence="1">Homodimer.</text>
</comment>
<comment type="subcellular location">
    <subcellularLocation>
        <location evidence="1">Cytoplasm</location>
    </subcellularLocation>
</comment>
<comment type="similarity">
    <text evidence="1">Belongs to the class-II aminoacyl-tRNA synthetase family.</text>
</comment>